<organism>
    <name type="scientific">Treponema pallidum (strain Nichols)</name>
    <dbReference type="NCBI Taxonomy" id="243276"/>
    <lineage>
        <taxon>Bacteria</taxon>
        <taxon>Pseudomonadati</taxon>
        <taxon>Spirochaetota</taxon>
        <taxon>Spirochaetia</taxon>
        <taxon>Spirochaetales</taxon>
        <taxon>Treponemataceae</taxon>
        <taxon>Treponema</taxon>
    </lineage>
</organism>
<evidence type="ECO:0000255" key="1">
    <source>
        <dbReference type="HAMAP-Rule" id="MF_00268"/>
    </source>
</evidence>
<evidence type="ECO:0000256" key="2">
    <source>
        <dbReference type="SAM" id="MobiDB-lite"/>
    </source>
</evidence>
<gene>
    <name evidence="1" type="primary">recA</name>
    <name type="ordered locus">TP_0692</name>
</gene>
<keyword id="KW-0067">ATP-binding</keyword>
<keyword id="KW-0963">Cytoplasm</keyword>
<keyword id="KW-0227">DNA damage</keyword>
<keyword id="KW-0233">DNA recombination</keyword>
<keyword id="KW-0234">DNA repair</keyword>
<keyword id="KW-0238">DNA-binding</keyword>
<keyword id="KW-0547">Nucleotide-binding</keyword>
<keyword id="KW-1185">Reference proteome</keyword>
<keyword id="KW-0742">SOS response</keyword>
<accession>O83690</accession>
<name>RECA_TREPA</name>
<reference key="1">
    <citation type="journal article" date="1998" name="Science">
        <title>Complete genome sequence of Treponema pallidum, the syphilis spirochete.</title>
        <authorList>
            <person name="Fraser C.M."/>
            <person name="Norris S.J."/>
            <person name="Weinstock G.M."/>
            <person name="White O."/>
            <person name="Sutton G.G."/>
            <person name="Dodson R.J."/>
            <person name="Gwinn M.L."/>
            <person name="Hickey E.K."/>
            <person name="Clayton R.A."/>
            <person name="Ketchum K.A."/>
            <person name="Sodergren E."/>
            <person name="Hardham J.M."/>
            <person name="McLeod M.P."/>
            <person name="Salzberg S.L."/>
            <person name="Peterson J.D."/>
            <person name="Khalak H.G."/>
            <person name="Richardson D.L."/>
            <person name="Howell J.K."/>
            <person name="Chidambaram M."/>
            <person name="Utterback T.R."/>
            <person name="McDonald L.A."/>
            <person name="Artiach P."/>
            <person name="Bowman C."/>
            <person name="Cotton M.D."/>
            <person name="Fujii C."/>
            <person name="Garland S.A."/>
            <person name="Hatch B."/>
            <person name="Horst K."/>
            <person name="Roberts K.M."/>
            <person name="Sandusky M."/>
            <person name="Weidman J.F."/>
            <person name="Smith H.O."/>
            <person name="Venter J.C."/>
        </authorList>
    </citation>
    <scope>NUCLEOTIDE SEQUENCE [LARGE SCALE GENOMIC DNA]</scope>
    <source>
        <strain>Nichols</strain>
    </source>
</reference>
<protein>
    <recommendedName>
        <fullName evidence="1">Protein RecA</fullName>
    </recommendedName>
    <alternativeName>
        <fullName evidence="1">Recombinase A</fullName>
    </alternativeName>
</protein>
<comment type="function">
    <text evidence="1">Can catalyze the hydrolysis of ATP in the presence of single-stranded DNA, the ATP-dependent uptake of single-stranded DNA by duplex DNA, and the ATP-dependent hybridization of homologous single-stranded DNAs. It interacts with LexA causing its activation and leading to its autocatalytic cleavage.</text>
</comment>
<comment type="subcellular location">
    <subcellularLocation>
        <location evidence="1">Cytoplasm</location>
    </subcellularLocation>
</comment>
<comment type="similarity">
    <text evidence="1">Belongs to the RecA family.</text>
</comment>
<feature type="chain" id="PRO_0000122886" description="Protein RecA">
    <location>
        <begin position="1"/>
        <end position="407"/>
    </location>
</feature>
<feature type="region of interest" description="Disordered" evidence="2">
    <location>
        <begin position="358"/>
        <end position="407"/>
    </location>
</feature>
<feature type="compositionally biased region" description="Low complexity" evidence="2">
    <location>
        <begin position="377"/>
        <end position="386"/>
    </location>
</feature>
<feature type="binding site" evidence="1">
    <location>
        <begin position="79"/>
        <end position="86"/>
    </location>
    <ligand>
        <name>ATP</name>
        <dbReference type="ChEBI" id="CHEBI:30616"/>
    </ligand>
</feature>
<dbReference type="EMBL" id="AE000520">
    <property type="protein sequence ID" value="AAC65660.1"/>
    <property type="molecule type" value="Genomic_DNA"/>
</dbReference>
<dbReference type="PIR" id="A71293">
    <property type="entry name" value="A71293"/>
</dbReference>
<dbReference type="RefSeq" id="WP_010882137.1">
    <property type="nucleotide sequence ID" value="NC_000919.1"/>
</dbReference>
<dbReference type="STRING" id="243276.TP_0692"/>
<dbReference type="EnsemblBacteria" id="AAC65660">
    <property type="protein sequence ID" value="AAC65660"/>
    <property type="gene ID" value="TP_0692"/>
</dbReference>
<dbReference type="KEGG" id="tpa:TP_0692"/>
<dbReference type="eggNOG" id="COG0468">
    <property type="taxonomic scope" value="Bacteria"/>
</dbReference>
<dbReference type="HOGENOM" id="CLU_040469_3_2_12"/>
<dbReference type="OrthoDB" id="9776733at2"/>
<dbReference type="Proteomes" id="UP000000811">
    <property type="component" value="Chromosome"/>
</dbReference>
<dbReference type="GO" id="GO:0005829">
    <property type="term" value="C:cytosol"/>
    <property type="evidence" value="ECO:0007669"/>
    <property type="project" value="TreeGrafter"/>
</dbReference>
<dbReference type="GO" id="GO:0005524">
    <property type="term" value="F:ATP binding"/>
    <property type="evidence" value="ECO:0007669"/>
    <property type="project" value="UniProtKB-UniRule"/>
</dbReference>
<dbReference type="GO" id="GO:0016887">
    <property type="term" value="F:ATP hydrolysis activity"/>
    <property type="evidence" value="ECO:0007669"/>
    <property type="project" value="InterPro"/>
</dbReference>
<dbReference type="GO" id="GO:0140664">
    <property type="term" value="F:ATP-dependent DNA damage sensor activity"/>
    <property type="evidence" value="ECO:0007669"/>
    <property type="project" value="InterPro"/>
</dbReference>
<dbReference type="GO" id="GO:0003684">
    <property type="term" value="F:damaged DNA binding"/>
    <property type="evidence" value="ECO:0007669"/>
    <property type="project" value="UniProtKB-UniRule"/>
</dbReference>
<dbReference type="GO" id="GO:0003697">
    <property type="term" value="F:single-stranded DNA binding"/>
    <property type="evidence" value="ECO:0007669"/>
    <property type="project" value="UniProtKB-UniRule"/>
</dbReference>
<dbReference type="GO" id="GO:0006310">
    <property type="term" value="P:DNA recombination"/>
    <property type="evidence" value="ECO:0007669"/>
    <property type="project" value="UniProtKB-UniRule"/>
</dbReference>
<dbReference type="GO" id="GO:0006281">
    <property type="term" value="P:DNA repair"/>
    <property type="evidence" value="ECO:0007669"/>
    <property type="project" value="UniProtKB-UniRule"/>
</dbReference>
<dbReference type="GO" id="GO:0009432">
    <property type="term" value="P:SOS response"/>
    <property type="evidence" value="ECO:0007669"/>
    <property type="project" value="UniProtKB-UniRule"/>
</dbReference>
<dbReference type="CDD" id="cd00983">
    <property type="entry name" value="RecA"/>
    <property type="match status" value="1"/>
</dbReference>
<dbReference type="FunFam" id="3.40.50.300:FF:000087">
    <property type="entry name" value="Recombinase RecA"/>
    <property type="match status" value="1"/>
</dbReference>
<dbReference type="Gene3D" id="3.40.50.300">
    <property type="entry name" value="P-loop containing nucleotide triphosphate hydrolases"/>
    <property type="match status" value="1"/>
</dbReference>
<dbReference type="HAMAP" id="MF_00268">
    <property type="entry name" value="RecA"/>
    <property type="match status" value="1"/>
</dbReference>
<dbReference type="InterPro" id="IPR003593">
    <property type="entry name" value="AAA+_ATPase"/>
</dbReference>
<dbReference type="InterPro" id="IPR013765">
    <property type="entry name" value="DNA_recomb/repair_RecA"/>
</dbReference>
<dbReference type="InterPro" id="IPR020584">
    <property type="entry name" value="DNA_recomb/repair_RecA_CS"/>
</dbReference>
<dbReference type="InterPro" id="IPR027417">
    <property type="entry name" value="P-loop_NTPase"/>
</dbReference>
<dbReference type="InterPro" id="IPR049261">
    <property type="entry name" value="RecA-like_C"/>
</dbReference>
<dbReference type="InterPro" id="IPR049428">
    <property type="entry name" value="RecA-like_N"/>
</dbReference>
<dbReference type="InterPro" id="IPR020588">
    <property type="entry name" value="RecA_ATP-bd"/>
</dbReference>
<dbReference type="InterPro" id="IPR023400">
    <property type="entry name" value="RecA_C_sf"/>
</dbReference>
<dbReference type="InterPro" id="IPR020587">
    <property type="entry name" value="RecA_monomer-monomer_interface"/>
</dbReference>
<dbReference type="NCBIfam" id="TIGR02012">
    <property type="entry name" value="tigrfam_recA"/>
    <property type="match status" value="1"/>
</dbReference>
<dbReference type="PANTHER" id="PTHR45900:SF1">
    <property type="entry name" value="MITOCHONDRIAL DNA REPAIR PROTEIN RECA HOMOLOG-RELATED"/>
    <property type="match status" value="1"/>
</dbReference>
<dbReference type="PANTHER" id="PTHR45900">
    <property type="entry name" value="RECA"/>
    <property type="match status" value="1"/>
</dbReference>
<dbReference type="Pfam" id="PF00154">
    <property type="entry name" value="RecA"/>
    <property type="match status" value="1"/>
</dbReference>
<dbReference type="Pfam" id="PF21096">
    <property type="entry name" value="RecA_C"/>
    <property type="match status" value="1"/>
</dbReference>
<dbReference type="PRINTS" id="PR00142">
    <property type="entry name" value="RECA"/>
</dbReference>
<dbReference type="SMART" id="SM00382">
    <property type="entry name" value="AAA"/>
    <property type="match status" value="1"/>
</dbReference>
<dbReference type="SUPFAM" id="SSF52540">
    <property type="entry name" value="P-loop containing nucleoside triphosphate hydrolases"/>
    <property type="match status" value="1"/>
</dbReference>
<dbReference type="SUPFAM" id="SSF54752">
    <property type="entry name" value="RecA protein, C-terminal domain"/>
    <property type="match status" value="1"/>
</dbReference>
<dbReference type="PROSITE" id="PS00321">
    <property type="entry name" value="RECA_1"/>
    <property type="match status" value="1"/>
</dbReference>
<dbReference type="PROSITE" id="PS50162">
    <property type="entry name" value="RECA_2"/>
    <property type="match status" value="1"/>
</dbReference>
<dbReference type="PROSITE" id="PS50163">
    <property type="entry name" value="RECA_3"/>
    <property type="match status" value="1"/>
</dbReference>
<sequence length="407" mass="44216">MSKALKGDVPVSSSFEEKMKALEAARLQIEKQFGQGSLMKLGKDDAVQGVEVIPTGNILLDEALGIGGYPRGRIIEIFGPESSGKTTLALHAVAEAQKRGGIAAFIDAEHALDPQYAKDLGVSVGDLWISQPDTGEQALEIAESLVRSGAVDIIVVDSVAALTPQAEIQGDMGDAHVGLIARLMSQALRKLTSIINKSKCTLIFINQLRMKIGIMFGNPETTTGGIALKFYSSVRIEVRKVETLSRGDEEAWGNKVRIRIVKNKMAPPFRKVETEILFGKGFSAFSCLLDAAVKQEIIEKKGAWYAYREEKIGQGRDNAVGFLQQNMDITLEIERAVRTKLFPKQAFISSFQEHRPALSLEASPEESDAKTLRRXASRGAGASSSRVQEGSAANDHFQDESTTAKLL</sequence>
<proteinExistence type="inferred from homology"/>